<accession>A4TN15</accession>
<gene>
    <name evidence="1" type="primary">ihfB</name>
    <name evidence="1" type="synonym">himD</name>
    <name type="ordered locus">YPDSF_2302</name>
</gene>
<evidence type="ECO:0000255" key="1">
    <source>
        <dbReference type="HAMAP-Rule" id="MF_00381"/>
    </source>
</evidence>
<sequence>MTKSELIERLAGQQSHVPAKVVEDAVKEMLEHMAGTLAEGERIEIRGFGSFSLHYRAPRVGRNPKTGDKVELEGKYVPHFKPGKELRDRANIYG</sequence>
<proteinExistence type="inferred from homology"/>
<keyword id="KW-0233">DNA recombination</keyword>
<keyword id="KW-0238">DNA-binding</keyword>
<keyword id="KW-0804">Transcription</keyword>
<keyword id="KW-0805">Transcription regulation</keyword>
<keyword id="KW-0810">Translation regulation</keyword>
<name>IHFB_YERPP</name>
<protein>
    <recommendedName>
        <fullName evidence="1">Integration host factor subunit beta</fullName>
        <shortName evidence="1">IHF-beta</shortName>
    </recommendedName>
</protein>
<dbReference type="EMBL" id="CP000668">
    <property type="protein sequence ID" value="ABP40677.1"/>
    <property type="molecule type" value="Genomic_DNA"/>
</dbReference>
<dbReference type="RefSeq" id="WP_002211322.1">
    <property type="nucleotide sequence ID" value="NZ_CP009715.1"/>
</dbReference>
<dbReference type="SMR" id="A4TN15"/>
<dbReference type="GeneID" id="96664989"/>
<dbReference type="KEGG" id="ypp:YPDSF_2302"/>
<dbReference type="PATRIC" id="fig|386656.14.peg.3796"/>
<dbReference type="GO" id="GO:0005694">
    <property type="term" value="C:chromosome"/>
    <property type="evidence" value="ECO:0007669"/>
    <property type="project" value="InterPro"/>
</dbReference>
<dbReference type="GO" id="GO:0005829">
    <property type="term" value="C:cytosol"/>
    <property type="evidence" value="ECO:0007669"/>
    <property type="project" value="TreeGrafter"/>
</dbReference>
<dbReference type="GO" id="GO:0003677">
    <property type="term" value="F:DNA binding"/>
    <property type="evidence" value="ECO:0007669"/>
    <property type="project" value="UniProtKB-UniRule"/>
</dbReference>
<dbReference type="GO" id="GO:0030527">
    <property type="term" value="F:structural constituent of chromatin"/>
    <property type="evidence" value="ECO:0007669"/>
    <property type="project" value="InterPro"/>
</dbReference>
<dbReference type="GO" id="GO:0006310">
    <property type="term" value="P:DNA recombination"/>
    <property type="evidence" value="ECO:0007669"/>
    <property type="project" value="UniProtKB-UniRule"/>
</dbReference>
<dbReference type="GO" id="GO:0006355">
    <property type="term" value="P:regulation of DNA-templated transcription"/>
    <property type="evidence" value="ECO:0007669"/>
    <property type="project" value="UniProtKB-UniRule"/>
</dbReference>
<dbReference type="GO" id="GO:0006417">
    <property type="term" value="P:regulation of translation"/>
    <property type="evidence" value="ECO:0007669"/>
    <property type="project" value="UniProtKB-UniRule"/>
</dbReference>
<dbReference type="CDD" id="cd13836">
    <property type="entry name" value="IHF_B"/>
    <property type="match status" value="1"/>
</dbReference>
<dbReference type="FunFam" id="4.10.520.10:FF:000003">
    <property type="entry name" value="Integration host factor subunit beta"/>
    <property type="match status" value="1"/>
</dbReference>
<dbReference type="Gene3D" id="4.10.520.10">
    <property type="entry name" value="IHF-like DNA-binding proteins"/>
    <property type="match status" value="1"/>
</dbReference>
<dbReference type="HAMAP" id="MF_00381">
    <property type="entry name" value="IHF_beta"/>
    <property type="match status" value="1"/>
</dbReference>
<dbReference type="InterPro" id="IPR000119">
    <property type="entry name" value="Hist_DNA-bd"/>
</dbReference>
<dbReference type="InterPro" id="IPR020816">
    <property type="entry name" value="Histone-like_DNA-bd_CS"/>
</dbReference>
<dbReference type="InterPro" id="IPR010992">
    <property type="entry name" value="IHF-like_DNA-bd_dom_sf"/>
</dbReference>
<dbReference type="InterPro" id="IPR005685">
    <property type="entry name" value="IHF_beta"/>
</dbReference>
<dbReference type="NCBIfam" id="TIGR00988">
    <property type="entry name" value="hip"/>
    <property type="match status" value="1"/>
</dbReference>
<dbReference type="NCBIfam" id="NF001222">
    <property type="entry name" value="PRK00199.1"/>
    <property type="match status" value="1"/>
</dbReference>
<dbReference type="PANTHER" id="PTHR33175">
    <property type="entry name" value="DNA-BINDING PROTEIN HU"/>
    <property type="match status" value="1"/>
</dbReference>
<dbReference type="PANTHER" id="PTHR33175:SF5">
    <property type="entry name" value="INTEGRATION HOST FACTOR SUBUNIT BETA"/>
    <property type="match status" value="1"/>
</dbReference>
<dbReference type="Pfam" id="PF00216">
    <property type="entry name" value="Bac_DNA_binding"/>
    <property type="match status" value="1"/>
</dbReference>
<dbReference type="PRINTS" id="PR01727">
    <property type="entry name" value="DNABINDINGHU"/>
</dbReference>
<dbReference type="SMART" id="SM00411">
    <property type="entry name" value="BHL"/>
    <property type="match status" value="1"/>
</dbReference>
<dbReference type="SUPFAM" id="SSF47729">
    <property type="entry name" value="IHF-like DNA-binding proteins"/>
    <property type="match status" value="1"/>
</dbReference>
<dbReference type="PROSITE" id="PS00045">
    <property type="entry name" value="HISTONE_LIKE"/>
    <property type="match status" value="1"/>
</dbReference>
<comment type="function">
    <text evidence="1">This protein is one of the two subunits of integration host factor, a specific DNA-binding protein that functions in genetic recombination as well as in transcriptional and translational control.</text>
</comment>
<comment type="subunit">
    <text evidence="1">Heterodimer of an alpha and a beta chain.</text>
</comment>
<comment type="similarity">
    <text evidence="1">Belongs to the bacterial histone-like protein family.</text>
</comment>
<feature type="chain" id="PRO_1000060681" description="Integration host factor subunit beta">
    <location>
        <begin position="1"/>
        <end position="94"/>
    </location>
</feature>
<organism>
    <name type="scientific">Yersinia pestis (strain Pestoides F)</name>
    <dbReference type="NCBI Taxonomy" id="386656"/>
    <lineage>
        <taxon>Bacteria</taxon>
        <taxon>Pseudomonadati</taxon>
        <taxon>Pseudomonadota</taxon>
        <taxon>Gammaproteobacteria</taxon>
        <taxon>Enterobacterales</taxon>
        <taxon>Yersiniaceae</taxon>
        <taxon>Yersinia</taxon>
    </lineage>
</organism>
<reference key="1">
    <citation type="submission" date="2007-02" db="EMBL/GenBank/DDBJ databases">
        <title>Complete sequence of chromosome of Yersinia pestis Pestoides F.</title>
        <authorList>
            <consortium name="US DOE Joint Genome Institute"/>
            <person name="Copeland A."/>
            <person name="Lucas S."/>
            <person name="Lapidus A."/>
            <person name="Barry K."/>
            <person name="Detter J.C."/>
            <person name="Glavina del Rio T."/>
            <person name="Hammon N."/>
            <person name="Israni S."/>
            <person name="Dalin E."/>
            <person name="Tice H."/>
            <person name="Pitluck S."/>
            <person name="Di Bartolo G."/>
            <person name="Chain P."/>
            <person name="Malfatti S."/>
            <person name="Shin M."/>
            <person name="Vergez L."/>
            <person name="Schmutz J."/>
            <person name="Larimer F."/>
            <person name="Land M."/>
            <person name="Hauser L."/>
            <person name="Worsham P."/>
            <person name="Chu M."/>
            <person name="Bearden S."/>
            <person name="Garcia E."/>
            <person name="Richardson P."/>
        </authorList>
    </citation>
    <scope>NUCLEOTIDE SEQUENCE [LARGE SCALE GENOMIC DNA]</scope>
    <source>
        <strain>Pestoides F</strain>
    </source>
</reference>